<reference key="1">
    <citation type="submission" date="2006-09" db="EMBL/GenBank/DDBJ databases">
        <authorList>
            <consortium name="The Klebsiella pneumonia Genome Sequencing Project"/>
            <person name="McClelland M."/>
            <person name="Sanderson E.K."/>
            <person name="Spieth J."/>
            <person name="Clifton W.S."/>
            <person name="Latreille P."/>
            <person name="Sabo A."/>
            <person name="Pepin K."/>
            <person name="Bhonagiri V."/>
            <person name="Porwollik S."/>
            <person name="Ali J."/>
            <person name="Wilson R.K."/>
        </authorList>
    </citation>
    <scope>NUCLEOTIDE SEQUENCE [LARGE SCALE GENOMIC DNA]</scope>
    <source>
        <strain>ATCC 700721 / MGH 78578</strain>
    </source>
</reference>
<keyword id="KW-0378">Hydrolase</keyword>
<proteinExistence type="inferred from homology"/>
<dbReference type="EC" id="3.5.1.135" evidence="2"/>
<dbReference type="EMBL" id="CP000647">
    <property type="protein sequence ID" value="ABR78725.1"/>
    <property type="molecule type" value="Genomic_DNA"/>
</dbReference>
<dbReference type="SMR" id="A6TDQ4"/>
<dbReference type="STRING" id="272620.KPN_03328"/>
<dbReference type="PaxDb" id="272620-KPN_03328"/>
<dbReference type="EnsemblBacteria" id="ABR78725">
    <property type="protein sequence ID" value="ABR78725"/>
    <property type="gene ID" value="KPN_03328"/>
</dbReference>
<dbReference type="KEGG" id="kpn:KPN_03328"/>
<dbReference type="HOGENOM" id="CLU_152586_0_0_6"/>
<dbReference type="Proteomes" id="UP000000265">
    <property type="component" value="Chromosome"/>
</dbReference>
<dbReference type="GO" id="GO:0005829">
    <property type="term" value="C:cytosol"/>
    <property type="evidence" value="ECO:0007669"/>
    <property type="project" value="TreeGrafter"/>
</dbReference>
<dbReference type="GO" id="GO:0016813">
    <property type="term" value="F:hydrolase activity, acting on carbon-nitrogen (but not peptide) bonds, in linear amidines"/>
    <property type="evidence" value="ECO:0007669"/>
    <property type="project" value="UniProtKB-UniRule"/>
</dbReference>
<dbReference type="GO" id="GO:0106251">
    <property type="term" value="F:N4-acetylcytidine amidohydrolase activity"/>
    <property type="evidence" value="ECO:0007669"/>
    <property type="project" value="RHEA"/>
</dbReference>
<dbReference type="CDD" id="cd06552">
    <property type="entry name" value="ASCH_yqfb_like"/>
    <property type="match status" value="1"/>
</dbReference>
<dbReference type="FunFam" id="2.30.130.30:FF:000001">
    <property type="entry name" value="UPF0267 protein YqfB"/>
    <property type="match status" value="1"/>
</dbReference>
<dbReference type="Gene3D" id="2.30.130.30">
    <property type="entry name" value="Hypothetical protein"/>
    <property type="match status" value="1"/>
</dbReference>
<dbReference type="HAMAP" id="MF_00684">
    <property type="entry name" value="ac4C_amidohydr"/>
    <property type="match status" value="1"/>
</dbReference>
<dbReference type="InterPro" id="IPR008314">
    <property type="entry name" value="AC4CH"/>
</dbReference>
<dbReference type="InterPro" id="IPR007374">
    <property type="entry name" value="ASCH_domain"/>
</dbReference>
<dbReference type="InterPro" id="IPR015947">
    <property type="entry name" value="PUA-like_sf"/>
</dbReference>
<dbReference type="NCBIfam" id="NF003443">
    <property type="entry name" value="PRK04980.1"/>
    <property type="match status" value="1"/>
</dbReference>
<dbReference type="PANTHER" id="PTHR38088">
    <property type="entry name" value="UCP029143 FAMILY PROTEIN"/>
    <property type="match status" value="1"/>
</dbReference>
<dbReference type="PANTHER" id="PTHR38088:SF2">
    <property type="entry name" value="UCP029143 FAMILY PROTEIN"/>
    <property type="match status" value="1"/>
</dbReference>
<dbReference type="Pfam" id="PF04266">
    <property type="entry name" value="ASCH"/>
    <property type="match status" value="1"/>
</dbReference>
<dbReference type="PIRSF" id="PIRSF029143">
    <property type="entry name" value="UCP029143"/>
    <property type="match status" value="1"/>
</dbReference>
<dbReference type="SMART" id="SM01022">
    <property type="entry name" value="ASCH"/>
    <property type="match status" value="1"/>
</dbReference>
<dbReference type="SUPFAM" id="SSF88697">
    <property type="entry name" value="PUA domain-like"/>
    <property type="match status" value="1"/>
</dbReference>
<sequence>MQANDITFFQRFQDDILAGRKTITIRDAAESHFKPGDVLRVGRYEDDGYFCTIAVTATSTVTLDTLTEQHAQQENMTLGQLRQVISDIYPGESQFYVIEFKTL</sequence>
<accession>A6TDQ4</accession>
<comment type="function">
    <text evidence="2">Catalyzes the hydrolysis of N(4)-acetylcytidine (ac4C).</text>
</comment>
<comment type="catalytic activity">
    <reaction evidence="2">
        <text>N(4)-acetylcytidine + H2O = cytidine + acetate + H(+)</text>
        <dbReference type="Rhea" id="RHEA:62932"/>
        <dbReference type="ChEBI" id="CHEBI:15377"/>
        <dbReference type="ChEBI" id="CHEBI:15378"/>
        <dbReference type="ChEBI" id="CHEBI:17562"/>
        <dbReference type="ChEBI" id="CHEBI:30089"/>
        <dbReference type="ChEBI" id="CHEBI:70989"/>
        <dbReference type="EC" id="3.5.1.135"/>
    </reaction>
</comment>
<comment type="catalytic activity">
    <reaction evidence="2">
        <text>N(4)-acetyl-2'-deoxycytidine + H2O = 2'-deoxycytidine + acetate + H(+)</text>
        <dbReference type="Rhea" id="RHEA:62936"/>
        <dbReference type="ChEBI" id="CHEBI:15377"/>
        <dbReference type="ChEBI" id="CHEBI:15378"/>
        <dbReference type="ChEBI" id="CHEBI:15698"/>
        <dbReference type="ChEBI" id="CHEBI:30089"/>
        <dbReference type="ChEBI" id="CHEBI:146133"/>
        <dbReference type="EC" id="3.5.1.135"/>
    </reaction>
</comment>
<comment type="catalytic activity">
    <reaction evidence="2">
        <text>N(4)-acetylcytosine + H2O = cytosine + acetate + H(+)</text>
        <dbReference type="Rhea" id="RHEA:62940"/>
        <dbReference type="ChEBI" id="CHEBI:15377"/>
        <dbReference type="ChEBI" id="CHEBI:15378"/>
        <dbReference type="ChEBI" id="CHEBI:16040"/>
        <dbReference type="ChEBI" id="CHEBI:30089"/>
        <dbReference type="ChEBI" id="CHEBI:146134"/>
        <dbReference type="EC" id="3.5.1.135"/>
    </reaction>
</comment>
<comment type="similarity">
    <text evidence="2">Belongs to the N(4)-acetylcytidine amidohydrolase family.</text>
</comment>
<evidence type="ECO:0000255" key="1"/>
<evidence type="ECO:0000255" key="2">
    <source>
        <dbReference type="HAMAP-Rule" id="MF_00684"/>
    </source>
</evidence>
<protein>
    <recommendedName>
        <fullName evidence="2">N(4)-acetylcytidine amidohydrolase</fullName>
        <shortName evidence="2">ac4C amidohydrolase</shortName>
        <ecNumber evidence="2">3.5.1.135</ecNumber>
    </recommendedName>
</protein>
<organism>
    <name type="scientific">Klebsiella pneumoniae subsp. pneumoniae (strain ATCC 700721 / MGH 78578)</name>
    <dbReference type="NCBI Taxonomy" id="272620"/>
    <lineage>
        <taxon>Bacteria</taxon>
        <taxon>Pseudomonadati</taxon>
        <taxon>Pseudomonadota</taxon>
        <taxon>Gammaproteobacteria</taxon>
        <taxon>Enterobacterales</taxon>
        <taxon>Enterobacteriaceae</taxon>
        <taxon>Klebsiella/Raoultella group</taxon>
        <taxon>Klebsiella</taxon>
        <taxon>Klebsiella pneumoniae complex</taxon>
    </lineage>
</organism>
<name>AC4CH_KLEP7</name>
<gene>
    <name type="ordered locus">KPN78578_32640</name>
    <name type="ORF">KPN_03328</name>
</gene>
<feature type="chain" id="PRO_1000061984" description="N(4)-acetylcytidine amidohydrolase">
    <location>
        <begin position="1"/>
        <end position="103"/>
    </location>
</feature>
<feature type="domain" description="ASCH" evidence="1">
    <location>
        <begin position="6"/>
        <end position="100"/>
    </location>
</feature>
<feature type="active site" description="Proton acceptor" evidence="2">
    <location>
        <position position="21"/>
    </location>
</feature>
<feature type="active site" description="Nucleophile" evidence="2">
    <location>
        <position position="24"/>
    </location>
</feature>
<feature type="active site" description="Proton donor" evidence="2">
    <location>
        <position position="74"/>
    </location>
</feature>